<name>MCP_LCDV1</name>
<dbReference type="EMBL" id="L63545">
    <property type="protein sequence ID" value="AAC24486.2"/>
    <property type="molecule type" value="Genomic_DNA"/>
</dbReference>
<dbReference type="PIR" id="JQ2345">
    <property type="entry name" value="KIXFFV"/>
</dbReference>
<dbReference type="SMR" id="P22176"/>
<dbReference type="KEGG" id="vg:1497288"/>
<dbReference type="Proteomes" id="UP000000516">
    <property type="component" value="Segment"/>
</dbReference>
<dbReference type="GO" id="GO:0019028">
    <property type="term" value="C:viral capsid"/>
    <property type="evidence" value="ECO:0007669"/>
    <property type="project" value="UniProtKB-KW"/>
</dbReference>
<dbReference type="GO" id="GO:0005198">
    <property type="term" value="F:structural molecule activity"/>
    <property type="evidence" value="ECO:0007669"/>
    <property type="project" value="InterPro"/>
</dbReference>
<dbReference type="Gene3D" id="2.70.9.10">
    <property type="entry name" value="Adenovirus Type 2 Hexon, domain 4"/>
    <property type="match status" value="1"/>
</dbReference>
<dbReference type="Gene3D" id="2.70.9.20">
    <property type="entry name" value="Major capsid protein Vp54"/>
    <property type="match status" value="1"/>
</dbReference>
<dbReference type="InterPro" id="IPR031654">
    <property type="entry name" value="Capsid_N"/>
</dbReference>
<dbReference type="InterPro" id="IPR007542">
    <property type="entry name" value="MCP_C"/>
</dbReference>
<dbReference type="InterPro" id="IPR038519">
    <property type="entry name" value="MCP_C_sf"/>
</dbReference>
<dbReference type="InterPro" id="IPR016112">
    <property type="entry name" value="VP_dsDNA_II"/>
</dbReference>
<dbReference type="Pfam" id="PF16903">
    <property type="entry name" value="Capsid_N"/>
    <property type="match status" value="1"/>
</dbReference>
<dbReference type="Pfam" id="PF04451">
    <property type="entry name" value="Capsid_NCLDV"/>
    <property type="match status" value="1"/>
</dbReference>
<dbReference type="SUPFAM" id="SSF49749">
    <property type="entry name" value="Group II dsDNA viruses VP"/>
    <property type="match status" value="2"/>
</dbReference>
<organismHost>
    <name type="scientific">Pleuronectoidei</name>
    <dbReference type="NCBI Taxonomy" id="30942"/>
</organismHost>
<comment type="function">
    <text evidence="1">Major capsid protein that self assembles to form an icosahedral capsid. Represents around 50% of the total virion protein mass (By similarity).</text>
</comment>
<comment type="subunit">
    <text evidence="1">Homotrimer.</text>
</comment>
<comment type="subcellular location">
    <subcellularLocation>
        <location evidence="2">Virion</location>
    </subcellularLocation>
</comment>
<comment type="similarity">
    <text evidence="2">Belongs to the NCLDV major capsid protein family.</text>
</comment>
<comment type="caution">
    <text evidence="3">Was originally thought to be a thymidine kinase.</text>
</comment>
<reference key="1">
    <citation type="journal article" date="1991" name="Virology">
        <title>The primary structure of the thymidine kinase gene of fish lymphocystis disease virus.</title>
        <authorList>
            <person name="Schnitzler P."/>
            <person name="Handermann M."/>
            <person name="Szepe O."/>
            <person name="Darai G."/>
        </authorList>
    </citation>
    <scope>PRELIMINARY NUCLEOTIDE SEQUENCE</scope>
    <source>
        <strain>F</strain>
    </source>
</reference>
<reference key="2">
    <citation type="journal article" date="1997" name="Virology">
        <title>The complete DNA sequence of lymphocystis disease virus.</title>
        <authorList>
            <person name="Tidona C.A."/>
            <person name="Darai G."/>
        </authorList>
    </citation>
    <scope>NUCLEOTIDE SEQUENCE [LARGE SCALE GENOMIC DNA]</scope>
</reference>
<reference key="3">
    <citation type="journal article" date="1993" name="J. Gen. Virol.">
        <title>Identification of the gene encoding the major capsid protein of fish lymphocystis disease virus.</title>
        <authorList>
            <person name="Schnitzler P."/>
            <person name="Darai G."/>
        </authorList>
    </citation>
    <scope>IDENTIFICATION</scope>
</reference>
<gene>
    <name type="primary">MCP</name>
</gene>
<proteinExistence type="inferred from homology"/>
<accession>P22176</accession>
<feature type="chain" id="PRO_0000222378" description="Major capsid protein">
    <location>
        <begin position="1"/>
        <end position="459"/>
    </location>
</feature>
<evidence type="ECO:0000250" key="1"/>
<evidence type="ECO:0000305" key="2"/>
<evidence type="ECO:0000305" key="3">
    <source>
    </source>
</evidence>
<organism>
    <name type="scientific">Lymphocystis disease virus 1 (isolate Darai)</name>
    <name type="common">LCDV-1</name>
    <dbReference type="NCBI Taxonomy" id="654922"/>
    <lineage>
        <taxon>Viruses</taxon>
        <taxon>Varidnaviria</taxon>
        <taxon>Bamfordvirae</taxon>
        <taxon>Nucleocytoviricota</taxon>
        <taxon>Megaviricetes</taxon>
        <taxon>Pimascovirales</taxon>
        <taxon>Iridoviridae</taxon>
        <taxon>Alphairidovirinae</taxon>
        <taxon>Lymphocystivirus</taxon>
        <taxon>Fish lymphocystis disease virus</taxon>
    </lineage>
</organism>
<protein>
    <recommendedName>
        <fullName>Major capsid protein</fullName>
        <shortName>MCP</shortName>
    </recommendedName>
    <alternativeName>
        <fullName>P50</fullName>
    </alternativeName>
</protein>
<sequence length="459" mass="51347">MTSVAGSSVTSAFIDLATYDTIEKHLYGGDSAVAYFVRETKKCTWFSKLPVLLTRCSGSPNFDQEFSVNVSRGGDYVLNSWMTVRIPAIKLKADNRMNNNGTIRWCKNLFHNLIKQTSVQFNDLVAQKFESYFLDYWAAFSMCGSKRAGYNNMIGNTIDMIQPVDHTGMLPEKVLVLPLPYFFSRDSGVALPSAALPYNEIRLTFHLRDYTELLIFQHKQDCTIIPITAADLEYGKPDLKDVQVWITNAVVTNEERRLMGTTPRDILVEQVQTAPKHVFQPLTIPSPNFDIRFSHAIKLLFFGVRNTTHAAVQSNYTTASPVILEEAYASDLSLVAADPIANVTLVYENSARLNEMGSEYYSLVQPYYFGGSIPIETGYHMYCYSLNMMDMDPMGSTNYGRLSNVSMKLKTSDKAVVNAGGGGGNMSGYKDAQKFEFLTMAINHNVIRIKNGSMGFPVL</sequence>
<keyword id="KW-0167">Capsid protein</keyword>
<keyword id="KW-0426">Late protein</keyword>
<keyword id="KW-1185">Reference proteome</keyword>
<keyword id="KW-0946">Virion</keyword>